<name>LSPA_NEIMF</name>
<organism>
    <name type="scientific">Neisseria meningitidis serogroup C / serotype 2a (strain ATCC 700532 / DSM 15464 / FAM18)</name>
    <dbReference type="NCBI Taxonomy" id="272831"/>
    <lineage>
        <taxon>Bacteria</taxon>
        <taxon>Pseudomonadati</taxon>
        <taxon>Pseudomonadota</taxon>
        <taxon>Betaproteobacteria</taxon>
        <taxon>Neisseriales</taxon>
        <taxon>Neisseriaceae</taxon>
        <taxon>Neisseria</taxon>
    </lineage>
</organism>
<dbReference type="EC" id="3.4.23.36" evidence="1"/>
<dbReference type="EMBL" id="AM421808">
    <property type="protein sequence ID" value="CAM09693.1"/>
    <property type="molecule type" value="Genomic_DNA"/>
</dbReference>
<dbReference type="SMR" id="A1KS63"/>
<dbReference type="KEGG" id="nmc:NMC0384"/>
<dbReference type="HOGENOM" id="CLU_083252_4_0_4"/>
<dbReference type="UniPathway" id="UPA00665"/>
<dbReference type="Proteomes" id="UP000002286">
    <property type="component" value="Chromosome"/>
</dbReference>
<dbReference type="GO" id="GO:0005886">
    <property type="term" value="C:plasma membrane"/>
    <property type="evidence" value="ECO:0007669"/>
    <property type="project" value="UniProtKB-SubCell"/>
</dbReference>
<dbReference type="GO" id="GO:0004190">
    <property type="term" value="F:aspartic-type endopeptidase activity"/>
    <property type="evidence" value="ECO:0007669"/>
    <property type="project" value="UniProtKB-UniRule"/>
</dbReference>
<dbReference type="GO" id="GO:0006508">
    <property type="term" value="P:proteolysis"/>
    <property type="evidence" value="ECO:0007669"/>
    <property type="project" value="UniProtKB-KW"/>
</dbReference>
<dbReference type="HAMAP" id="MF_00161">
    <property type="entry name" value="LspA"/>
    <property type="match status" value="1"/>
</dbReference>
<dbReference type="InterPro" id="IPR001872">
    <property type="entry name" value="Peptidase_A8"/>
</dbReference>
<dbReference type="NCBIfam" id="TIGR00077">
    <property type="entry name" value="lspA"/>
    <property type="match status" value="1"/>
</dbReference>
<dbReference type="PANTHER" id="PTHR33695">
    <property type="entry name" value="LIPOPROTEIN SIGNAL PEPTIDASE"/>
    <property type="match status" value="1"/>
</dbReference>
<dbReference type="PANTHER" id="PTHR33695:SF1">
    <property type="entry name" value="LIPOPROTEIN SIGNAL PEPTIDASE"/>
    <property type="match status" value="1"/>
</dbReference>
<dbReference type="Pfam" id="PF01252">
    <property type="entry name" value="Peptidase_A8"/>
    <property type="match status" value="1"/>
</dbReference>
<dbReference type="PRINTS" id="PR00781">
    <property type="entry name" value="LIPOSIGPTASE"/>
</dbReference>
<dbReference type="PROSITE" id="PS00855">
    <property type="entry name" value="SPASE_II"/>
    <property type="match status" value="1"/>
</dbReference>
<protein>
    <recommendedName>
        <fullName evidence="1">Lipoprotein signal peptidase</fullName>
        <ecNumber evidence="1">3.4.23.36</ecNumber>
    </recommendedName>
    <alternativeName>
        <fullName evidence="1">Prolipoprotein signal peptidase</fullName>
    </alternativeName>
    <alternativeName>
        <fullName evidence="1">Signal peptidase II</fullName>
        <shortName evidence="1">SPase II</shortName>
    </alternativeName>
</protein>
<sequence length="165" mass="18600">MSSSVSSKTRYWVLALAAIVLDQWSKWAVLSSFQYRERVNVIPSFFDLTLVYNPGAAFSFLADQGGWQKYFFLVLAVAVSAYLVRAILRDEFATLGKTGAAMIIGGALGNVIDRLIHGHVVDFLLFYWQNWFYPAFNIADSFICVGAVLAVLDNIVHRKTQEEKY</sequence>
<comment type="function">
    <text evidence="1">This protein specifically catalyzes the removal of signal peptides from prolipoproteins.</text>
</comment>
<comment type="catalytic activity">
    <reaction evidence="1">
        <text>Release of signal peptides from bacterial membrane prolipoproteins. Hydrolyzes -Xaa-Yaa-Zaa-|-(S,diacylglyceryl)Cys-, in which Xaa is hydrophobic (preferably Leu), and Yaa (Ala or Ser) and Zaa (Gly or Ala) have small, neutral side chains.</text>
        <dbReference type="EC" id="3.4.23.36"/>
    </reaction>
</comment>
<comment type="pathway">
    <text evidence="1">Protein modification; lipoprotein biosynthesis (signal peptide cleavage).</text>
</comment>
<comment type="subcellular location">
    <subcellularLocation>
        <location evidence="1">Cell inner membrane</location>
        <topology evidence="1">Multi-pass membrane protein</topology>
    </subcellularLocation>
</comment>
<comment type="similarity">
    <text evidence="1">Belongs to the peptidase A8 family.</text>
</comment>
<gene>
    <name evidence="1" type="primary">lspA</name>
    <name type="ordered locus">NMC0384</name>
</gene>
<evidence type="ECO:0000255" key="1">
    <source>
        <dbReference type="HAMAP-Rule" id="MF_00161"/>
    </source>
</evidence>
<reference key="1">
    <citation type="journal article" date="2007" name="PLoS Genet.">
        <title>Meningococcal genetic variation mechanisms viewed through comparative analysis of serogroup C strain FAM18.</title>
        <authorList>
            <person name="Bentley S.D."/>
            <person name="Vernikos G.S."/>
            <person name="Snyder L.A.S."/>
            <person name="Churcher C."/>
            <person name="Arrowsmith C."/>
            <person name="Chillingworth T."/>
            <person name="Cronin A."/>
            <person name="Davis P.H."/>
            <person name="Holroyd N.E."/>
            <person name="Jagels K."/>
            <person name="Maddison M."/>
            <person name="Moule S."/>
            <person name="Rabbinowitsch E."/>
            <person name="Sharp S."/>
            <person name="Unwin L."/>
            <person name="Whitehead S."/>
            <person name="Quail M.A."/>
            <person name="Achtman M."/>
            <person name="Barrell B.G."/>
            <person name="Saunders N.J."/>
            <person name="Parkhill J."/>
        </authorList>
    </citation>
    <scope>NUCLEOTIDE SEQUENCE [LARGE SCALE GENOMIC DNA]</scope>
    <source>
        <strain>ATCC 700532 / DSM 15464 / FAM18</strain>
    </source>
</reference>
<keyword id="KW-0064">Aspartyl protease</keyword>
<keyword id="KW-0997">Cell inner membrane</keyword>
<keyword id="KW-1003">Cell membrane</keyword>
<keyword id="KW-0378">Hydrolase</keyword>
<keyword id="KW-0472">Membrane</keyword>
<keyword id="KW-0645">Protease</keyword>
<keyword id="KW-0812">Transmembrane</keyword>
<keyword id="KW-1133">Transmembrane helix</keyword>
<accession>A1KS63</accession>
<feature type="chain" id="PRO_0000289405" description="Lipoprotein signal peptidase">
    <location>
        <begin position="1"/>
        <end position="165"/>
    </location>
</feature>
<feature type="transmembrane region" description="Helical" evidence="1">
    <location>
        <begin position="11"/>
        <end position="31"/>
    </location>
</feature>
<feature type="transmembrane region" description="Helical" evidence="1">
    <location>
        <begin position="41"/>
        <end position="61"/>
    </location>
</feature>
<feature type="transmembrane region" description="Helical" evidence="1">
    <location>
        <begin position="64"/>
        <end position="84"/>
    </location>
</feature>
<feature type="transmembrane region" description="Helical" evidence="1">
    <location>
        <begin position="92"/>
        <end position="112"/>
    </location>
</feature>
<feature type="transmembrane region" description="Helical" evidence="1">
    <location>
        <begin position="132"/>
        <end position="152"/>
    </location>
</feature>
<feature type="active site" evidence="1">
    <location>
        <position position="122"/>
    </location>
</feature>
<feature type="active site" evidence="1">
    <location>
        <position position="140"/>
    </location>
</feature>
<proteinExistence type="inferred from homology"/>